<reference key="1">
    <citation type="journal article" date="2000" name="Nature">
        <title>The complete sequence of the mucosal pathogen Ureaplasma urealyticum.</title>
        <authorList>
            <person name="Glass J.I."/>
            <person name="Lefkowitz E.J."/>
            <person name="Glass J.S."/>
            <person name="Heiner C.R."/>
            <person name="Chen E.Y."/>
            <person name="Cassell G.H."/>
        </authorList>
    </citation>
    <scope>NUCLEOTIDE SEQUENCE [LARGE SCALE GENOMIC DNA]</scope>
    <source>
        <strain>ATCC 700970</strain>
    </source>
</reference>
<name>SSRP_UREPA</name>
<keyword id="KW-0963">Cytoplasm</keyword>
<keyword id="KW-1185">Reference proteome</keyword>
<keyword id="KW-0694">RNA-binding</keyword>
<dbReference type="EMBL" id="AF222894">
    <property type="protein sequence ID" value="AAF30463.1"/>
    <property type="molecule type" value="Genomic_DNA"/>
</dbReference>
<dbReference type="RefSeq" id="WP_006688578.1">
    <property type="nucleotide sequence ID" value="NC_002162.1"/>
</dbReference>
<dbReference type="SMR" id="Q9PR87"/>
<dbReference type="STRING" id="273119.UU058"/>
<dbReference type="EnsemblBacteria" id="AAF30463">
    <property type="protein sequence ID" value="AAF30463"/>
    <property type="gene ID" value="UU058"/>
</dbReference>
<dbReference type="GeneID" id="29672291"/>
<dbReference type="KEGG" id="uur:UU058"/>
<dbReference type="eggNOG" id="COG0691">
    <property type="taxonomic scope" value="Bacteria"/>
</dbReference>
<dbReference type="HOGENOM" id="CLU_108953_0_1_14"/>
<dbReference type="OrthoDB" id="9805462at2"/>
<dbReference type="Proteomes" id="UP000000423">
    <property type="component" value="Chromosome"/>
</dbReference>
<dbReference type="GO" id="GO:0005829">
    <property type="term" value="C:cytosol"/>
    <property type="evidence" value="ECO:0007669"/>
    <property type="project" value="TreeGrafter"/>
</dbReference>
<dbReference type="GO" id="GO:0003723">
    <property type="term" value="F:RNA binding"/>
    <property type="evidence" value="ECO:0007669"/>
    <property type="project" value="UniProtKB-UniRule"/>
</dbReference>
<dbReference type="GO" id="GO:0070929">
    <property type="term" value="P:trans-translation"/>
    <property type="evidence" value="ECO:0007669"/>
    <property type="project" value="UniProtKB-UniRule"/>
</dbReference>
<dbReference type="CDD" id="cd09294">
    <property type="entry name" value="SmpB"/>
    <property type="match status" value="1"/>
</dbReference>
<dbReference type="Gene3D" id="2.40.280.10">
    <property type="match status" value="1"/>
</dbReference>
<dbReference type="HAMAP" id="MF_00023">
    <property type="entry name" value="SmpB"/>
    <property type="match status" value="1"/>
</dbReference>
<dbReference type="InterPro" id="IPR023620">
    <property type="entry name" value="SmpB"/>
</dbReference>
<dbReference type="InterPro" id="IPR000037">
    <property type="entry name" value="SsrA-bd_prot"/>
</dbReference>
<dbReference type="InterPro" id="IPR020081">
    <property type="entry name" value="SsrA-bd_prot_CS"/>
</dbReference>
<dbReference type="NCBIfam" id="NF003843">
    <property type="entry name" value="PRK05422.1"/>
    <property type="match status" value="1"/>
</dbReference>
<dbReference type="NCBIfam" id="TIGR00086">
    <property type="entry name" value="smpB"/>
    <property type="match status" value="1"/>
</dbReference>
<dbReference type="PANTHER" id="PTHR30308:SF2">
    <property type="entry name" value="SSRA-BINDING PROTEIN"/>
    <property type="match status" value="1"/>
</dbReference>
<dbReference type="PANTHER" id="PTHR30308">
    <property type="entry name" value="TMRNA-BINDING COMPONENT OF TRANS-TRANSLATION TAGGING COMPLEX"/>
    <property type="match status" value="1"/>
</dbReference>
<dbReference type="Pfam" id="PF01668">
    <property type="entry name" value="SmpB"/>
    <property type="match status" value="1"/>
</dbReference>
<dbReference type="SUPFAM" id="SSF74982">
    <property type="entry name" value="Small protein B (SmpB)"/>
    <property type="match status" value="1"/>
</dbReference>
<dbReference type="PROSITE" id="PS01317">
    <property type="entry name" value="SSRP"/>
    <property type="match status" value="1"/>
</dbReference>
<protein>
    <recommendedName>
        <fullName evidence="1">SsrA-binding protein</fullName>
    </recommendedName>
    <alternativeName>
        <fullName evidence="1">Small protein B</fullName>
    </alternativeName>
</protein>
<proteinExistence type="inferred from homology"/>
<organism>
    <name type="scientific">Ureaplasma parvum serovar 3 (strain ATCC 700970)</name>
    <dbReference type="NCBI Taxonomy" id="273119"/>
    <lineage>
        <taxon>Bacteria</taxon>
        <taxon>Bacillati</taxon>
        <taxon>Mycoplasmatota</taxon>
        <taxon>Mycoplasmoidales</taxon>
        <taxon>Mycoplasmoidaceae</taxon>
        <taxon>Ureaplasma</taxon>
    </lineage>
</organism>
<evidence type="ECO:0000255" key="1">
    <source>
        <dbReference type="HAMAP-Rule" id="MF_00023"/>
    </source>
</evidence>
<accession>Q9PR87</accession>
<gene>
    <name evidence="1" type="primary">smpB</name>
    <name type="ordered locus">UU058</name>
</gene>
<feature type="chain" id="PRO_0000103062" description="SsrA-binding protein">
    <location>
        <begin position="1"/>
        <end position="141"/>
    </location>
</feature>
<comment type="function">
    <text evidence="1">Required for rescue of stalled ribosomes mediated by trans-translation. Binds to transfer-messenger RNA (tmRNA), required for stable association of tmRNA with ribosomes. tmRNA and SmpB together mimic tRNA shape, replacing the anticodon stem-loop with SmpB. tmRNA is encoded by the ssrA gene; the 2 termini fold to resemble tRNA(Ala) and it encodes a 'tag peptide', a short internal open reading frame. During trans-translation Ala-aminoacylated tmRNA acts like a tRNA, entering the A-site of stalled ribosomes, displacing the stalled mRNA. The ribosome then switches to translate the ORF on the tmRNA; the nascent peptide is terminated with the 'tag peptide' encoded by the tmRNA and targeted for degradation. The ribosome is freed to recommence translation, which seems to be the essential function of trans-translation.</text>
</comment>
<comment type="subcellular location">
    <subcellularLocation>
        <location evidence="1">Cytoplasm</location>
    </subcellularLocation>
    <text evidence="1">The tmRNA-SmpB complex associates with stalled 70S ribosomes.</text>
</comment>
<comment type="similarity">
    <text evidence="1">Belongs to the SmpB family.</text>
</comment>
<sequence>MIVSNKHARRNYELLDFFECGIVLKGTEVKSISRANCSINEAYVQIIKNQALILNMHVANFFEGNNFNQDPYRNRKLLLHKKEIIRLQHLVKTQHMTIVPTKIYWKNNKLKIEIALGKGKQLHDKREDIKKRDLARETRLF</sequence>